<dbReference type="EMBL" id="AE017340">
    <property type="protein sequence ID" value="AAV82769.1"/>
    <property type="molecule type" value="Genomic_DNA"/>
</dbReference>
<dbReference type="RefSeq" id="WP_011235165.1">
    <property type="nucleotide sequence ID" value="NC_006512.1"/>
</dbReference>
<dbReference type="SMR" id="Q5QY04"/>
<dbReference type="STRING" id="283942.IL1937"/>
<dbReference type="GeneID" id="41337125"/>
<dbReference type="KEGG" id="ilo:IL1937"/>
<dbReference type="eggNOG" id="COG0359">
    <property type="taxonomic scope" value="Bacteria"/>
</dbReference>
<dbReference type="HOGENOM" id="CLU_078938_4_1_6"/>
<dbReference type="OrthoDB" id="9788336at2"/>
<dbReference type="Proteomes" id="UP000001171">
    <property type="component" value="Chromosome"/>
</dbReference>
<dbReference type="GO" id="GO:1990904">
    <property type="term" value="C:ribonucleoprotein complex"/>
    <property type="evidence" value="ECO:0007669"/>
    <property type="project" value="UniProtKB-KW"/>
</dbReference>
<dbReference type="GO" id="GO:0005840">
    <property type="term" value="C:ribosome"/>
    <property type="evidence" value="ECO:0007669"/>
    <property type="project" value="UniProtKB-KW"/>
</dbReference>
<dbReference type="GO" id="GO:0019843">
    <property type="term" value="F:rRNA binding"/>
    <property type="evidence" value="ECO:0007669"/>
    <property type="project" value="UniProtKB-UniRule"/>
</dbReference>
<dbReference type="GO" id="GO:0003735">
    <property type="term" value="F:structural constituent of ribosome"/>
    <property type="evidence" value="ECO:0007669"/>
    <property type="project" value="InterPro"/>
</dbReference>
<dbReference type="GO" id="GO:0006412">
    <property type="term" value="P:translation"/>
    <property type="evidence" value="ECO:0007669"/>
    <property type="project" value="UniProtKB-UniRule"/>
</dbReference>
<dbReference type="FunFam" id="3.10.430.100:FF:000001">
    <property type="entry name" value="50S ribosomal protein L9"/>
    <property type="match status" value="1"/>
</dbReference>
<dbReference type="FunFam" id="3.40.5.10:FF:000001">
    <property type="entry name" value="50S ribosomal protein L9"/>
    <property type="match status" value="1"/>
</dbReference>
<dbReference type="Gene3D" id="3.10.430.100">
    <property type="entry name" value="Ribosomal protein L9, C-terminal domain"/>
    <property type="match status" value="1"/>
</dbReference>
<dbReference type="Gene3D" id="3.40.5.10">
    <property type="entry name" value="Ribosomal protein L9, N-terminal domain"/>
    <property type="match status" value="1"/>
</dbReference>
<dbReference type="HAMAP" id="MF_00503">
    <property type="entry name" value="Ribosomal_bL9"/>
    <property type="match status" value="1"/>
</dbReference>
<dbReference type="InterPro" id="IPR000244">
    <property type="entry name" value="Ribosomal_bL9"/>
</dbReference>
<dbReference type="InterPro" id="IPR009027">
    <property type="entry name" value="Ribosomal_bL9/RNase_H1_N"/>
</dbReference>
<dbReference type="InterPro" id="IPR020594">
    <property type="entry name" value="Ribosomal_bL9_bac/chp"/>
</dbReference>
<dbReference type="InterPro" id="IPR020069">
    <property type="entry name" value="Ribosomal_bL9_C"/>
</dbReference>
<dbReference type="InterPro" id="IPR036791">
    <property type="entry name" value="Ribosomal_bL9_C_sf"/>
</dbReference>
<dbReference type="InterPro" id="IPR020070">
    <property type="entry name" value="Ribosomal_bL9_N"/>
</dbReference>
<dbReference type="InterPro" id="IPR036935">
    <property type="entry name" value="Ribosomal_bL9_N_sf"/>
</dbReference>
<dbReference type="NCBIfam" id="TIGR00158">
    <property type="entry name" value="L9"/>
    <property type="match status" value="1"/>
</dbReference>
<dbReference type="PANTHER" id="PTHR21368">
    <property type="entry name" value="50S RIBOSOMAL PROTEIN L9"/>
    <property type="match status" value="1"/>
</dbReference>
<dbReference type="Pfam" id="PF03948">
    <property type="entry name" value="Ribosomal_L9_C"/>
    <property type="match status" value="1"/>
</dbReference>
<dbReference type="Pfam" id="PF01281">
    <property type="entry name" value="Ribosomal_L9_N"/>
    <property type="match status" value="1"/>
</dbReference>
<dbReference type="SUPFAM" id="SSF55658">
    <property type="entry name" value="L9 N-domain-like"/>
    <property type="match status" value="1"/>
</dbReference>
<dbReference type="SUPFAM" id="SSF55653">
    <property type="entry name" value="Ribosomal protein L9 C-domain"/>
    <property type="match status" value="1"/>
</dbReference>
<dbReference type="PROSITE" id="PS00651">
    <property type="entry name" value="RIBOSOMAL_L9"/>
    <property type="match status" value="1"/>
</dbReference>
<name>RL9_IDILO</name>
<comment type="function">
    <text evidence="1">Binds to the 23S rRNA.</text>
</comment>
<comment type="similarity">
    <text evidence="1">Belongs to the bacterial ribosomal protein bL9 family.</text>
</comment>
<reference key="1">
    <citation type="journal article" date="2004" name="Proc. Natl. Acad. Sci. U.S.A.">
        <title>Genome sequence of the deep-sea gamma-proteobacterium Idiomarina loihiensis reveals amino acid fermentation as a source of carbon and energy.</title>
        <authorList>
            <person name="Hou S."/>
            <person name="Saw J.H."/>
            <person name="Lee K.S."/>
            <person name="Freitas T.A."/>
            <person name="Belisle C."/>
            <person name="Kawarabayasi Y."/>
            <person name="Donachie S.P."/>
            <person name="Pikina A."/>
            <person name="Galperin M.Y."/>
            <person name="Koonin E.V."/>
            <person name="Makarova K.S."/>
            <person name="Omelchenko M.V."/>
            <person name="Sorokin A."/>
            <person name="Wolf Y.I."/>
            <person name="Li Q.X."/>
            <person name="Keum Y.S."/>
            <person name="Campbell S."/>
            <person name="Denery J."/>
            <person name="Aizawa S."/>
            <person name="Shibata S."/>
            <person name="Malahoff A."/>
            <person name="Alam M."/>
        </authorList>
    </citation>
    <scope>NUCLEOTIDE SEQUENCE [LARGE SCALE GENOMIC DNA]</scope>
    <source>
        <strain>ATCC BAA-735 / DSM 15497 / L2-TR</strain>
    </source>
</reference>
<gene>
    <name evidence="1" type="primary">rplI</name>
    <name type="ordered locus">IL1937</name>
</gene>
<proteinExistence type="inferred from homology"/>
<evidence type="ECO:0000255" key="1">
    <source>
        <dbReference type="HAMAP-Rule" id="MF_00503"/>
    </source>
</evidence>
<evidence type="ECO:0000305" key="2"/>
<organism>
    <name type="scientific">Idiomarina loihiensis (strain ATCC BAA-735 / DSM 15497 / L2-TR)</name>
    <dbReference type="NCBI Taxonomy" id="283942"/>
    <lineage>
        <taxon>Bacteria</taxon>
        <taxon>Pseudomonadati</taxon>
        <taxon>Pseudomonadota</taxon>
        <taxon>Gammaproteobacteria</taxon>
        <taxon>Alteromonadales</taxon>
        <taxon>Idiomarinaceae</taxon>
        <taxon>Idiomarina</taxon>
    </lineage>
</organism>
<keyword id="KW-1185">Reference proteome</keyword>
<keyword id="KW-0687">Ribonucleoprotein</keyword>
<keyword id="KW-0689">Ribosomal protein</keyword>
<keyword id="KW-0694">RNA-binding</keyword>
<keyword id="KW-0699">rRNA-binding</keyword>
<accession>Q5QY04</accession>
<protein>
    <recommendedName>
        <fullName evidence="1">Large ribosomal subunit protein bL9</fullName>
    </recommendedName>
    <alternativeName>
        <fullName evidence="2">50S ribosomal protein L9</fullName>
    </alternativeName>
</protein>
<feature type="chain" id="PRO_0000236533" description="Large ribosomal subunit protein bL9">
    <location>
        <begin position="1"/>
        <end position="150"/>
    </location>
</feature>
<sequence length="150" mass="15988">MNVILLDKIANLGSLGDQVSVKSGYARNFLFPQGKAVPATKSNVDLFEQRRAEYEAKLADQLAAAQARAEKVNALDAVTIASKAGDEGKLFGSIGTRDIADAVTAAGVEVKKSEVLMPHGTLREVGEFDIELHLHADVFANITLKVVPAE</sequence>